<dbReference type="EMBL" id="Z12842">
    <property type="protein sequence ID" value="CAA78304.1"/>
    <property type="status" value="ALT_FRAME"/>
    <property type="molecule type" value="mRNA"/>
</dbReference>
<dbReference type="PIR" id="C45665">
    <property type="entry name" value="C45665"/>
</dbReference>
<dbReference type="STRING" id="9986.ENSOCUP00000002812"/>
<dbReference type="GlyCosmos" id="Q05005">
    <property type="glycosylation" value="1 site, No reported glycans"/>
</dbReference>
<dbReference type="PaxDb" id="9986-ENSOCUP00000002812"/>
<dbReference type="eggNOG" id="ENOG502QVFM">
    <property type="taxonomic scope" value="Eukaryota"/>
</dbReference>
<dbReference type="InParanoid" id="Q05005"/>
<dbReference type="Proteomes" id="UP000001811">
    <property type="component" value="Unplaced"/>
</dbReference>
<dbReference type="GO" id="GO:0016020">
    <property type="term" value="C:membrane"/>
    <property type="evidence" value="ECO:0007669"/>
    <property type="project" value="UniProtKB-SubCell"/>
</dbReference>
<dbReference type="InterPro" id="IPR020394">
    <property type="entry name" value="Uncharacterised_FAM23-like_TM"/>
</dbReference>
<dbReference type="PANTHER" id="PTHR31453">
    <property type="entry name" value="TRANSMEMBRANE PROTEIN 236"/>
    <property type="match status" value="1"/>
</dbReference>
<dbReference type="PANTHER" id="PTHR31453:SF2">
    <property type="entry name" value="TRANSMEMBRANE PROTEIN 236"/>
    <property type="match status" value="1"/>
</dbReference>
<feature type="chain" id="PRO_0000186717" description="Transmembrane protein 236">
    <location>
        <begin position="1"/>
        <end position="351"/>
    </location>
</feature>
<feature type="transmembrane region" description="Helical" evidence="1">
    <location>
        <begin position="9"/>
        <end position="29"/>
    </location>
</feature>
<feature type="transmembrane region" description="Helical" evidence="1">
    <location>
        <begin position="49"/>
        <end position="69"/>
    </location>
</feature>
<feature type="transmembrane region" description="Helical" evidence="1">
    <location>
        <begin position="88"/>
        <end position="108"/>
    </location>
</feature>
<feature type="transmembrane region" description="Helical" evidence="1">
    <location>
        <begin position="121"/>
        <end position="141"/>
    </location>
</feature>
<feature type="transmembrane region" description="Helical" evidence="1">
    <location>
        <begin position="264"/>
        <end position="284"/>
    </location>
</feature>
<feature type="transmembrane region" description="Helical" evidence="1">
    <location>
        <begin position="301"/>
        <end position="321"/>
    </location>
</feature>
<feature type="glycosylation site" description="N-linked (GlcNAc...) asparagine" evidence="1">
    <location>
        <position position="116"/>
    </location>
</feature>
<gene>
    <name type="primary">TMEM236</name>
</gene>
<comment type="subcellular location">
    <subcellularLocation>
        <location evidence="3">Membrane</location>
        <topology evidence="3">Multi-pass membrane protein</topology>
    </subcellularLocation>
</comment>
<comment type="tissue specificity">
    <text evidence="2">Intestine.</text>
</comment>
<comment type="developmental stage">
    <text evidence="2">Expressed in the intestine of adult but not baby rabbits.</text>
</comment>
<comment type="similarity">
    <text evidence="3">Belongs to the TMEM236 family.</text>
</comment>
<comment type="sequence caution" evidence="3">
    <conflict type="frameshift">
        <sequence resource="EMBL-CDS" id="CAA78304"/>
    </conflict>
</comment>
<keyword id="KW-0325">Glycoprotein</keyword>
<keyword id="KW-0472">Membrane</keyword>
<keyword id="KW-1185">Reference proteome</keyword>
<keyword id="KW-0812">Transmembrane</keyword>
<keyword id="KW-1133">Transmembrane helix</keyword>
<proteinExistence type="evidence at transcript level"/>
<evidence type="ECO:0000255" key="1"/>
<evidence type="ECO:0000269" key="2">
    <source>
    </source>
</evidence>
<evidence type="ECO:0000305" key="3"/>
<sequence length="351" mass="39814">MASGRLIKLVIFELLEFAAFSIPTLVIMEQFATAYQRTRNASEKTHYWLIVSCSIAYVAVVSLLIWVPVKVLLHKKRHLYKKIKGWRPVMMMCVVLTTLPSFIFSIAVTEVQKTINTTVDVLPDTLPDLPVSLVISSLIITDIIEKLRFHPIRGYQKSNEDKHIHTSSLQQVRTVTEQVRQNGENAASPCAASPSETWQPPGALTHSAVPMFAGPQEPFFGSGILKTMSRRDVRAEIFLWSFLLWSDTIEMVRVAGHPNVYKTNWLYPVYLFSFISLLRIIFTPQNPLLSCLGILLQDLPFVFVRLSLIIALGTITPVLGLCKNVLVTLSYVYFNFLTRFRAFSNFELSPF</sequence>
<reference key="1">
    <citation type="journal article" date="1993" name="J. Biol. Chem.">
        <title>Messenger RNAs expressed in intestine of adult but not baby rabbits. Isolation of cognate cDNAs and characterization of a novel brush border protein with esterase and phospholipase activity.</title>
        <authorList>
            <person name="Boll W."/>
            <person name="Schmid-Chanda T."/>
            <person name="Semenza G."/>
            <person name="Mantei N."/>
        </authorList>
    </citation>
    <scope>NUCLEOTIDE SEQUENCE [MRNA]</scope>
    <scope>TISSUE SPECIFICITY</scope>
    <scope>DEVELOPMENTAL STAGE</scope>
</reference>
<accession>Q05005</accession>
<name>TM236_RABIT</name>
<organism>
    <name type="scientific">Oryctolagus cuniculus</name>
    <name type="common">Rabbit</name>
    <dbReference type="NCBI Taxonomy" id="9986"/>
    <lineage>
        <taxon>Eukaryota</taxon>
        <taxon>Metazoa</taxon>
        <taxon>Chordata</taxon>
        <taxon>Craniata</taxon>
        <taxon>Vertebrata</taxon>
        <taxon>Euteleostomi</taxon>
        <taxon>Mammalia</taxon>
        <taxon>Eutheria</taxon>
        <taxon>Euarchontoglires</taxon>
        <taxon>Glires</taxon>
        <taxon>Lagomorpha</taxon>
        <taxon>Leporidae</taxon>
        <taxon>Oryctolagus</taxon>
    </lineage>
</organism>
<protein>
    <recommendedName>
        <fullName>Transmembrane protein 236</fullName>
    </recommendedName>
    <alternativeName>
        <fullName>Brush border protein AdRab-C</fullName>
    </alternativeName>
</protein>